<comment type="function">
    <text evidence="1">Required for maturation of urease via the functional incorporation of the urease nickel metallocenter.</text>
</comment>
<comment type="subunit">
    <text evidence="1">UreD, UreF and UreG form a complex that acts as a GTP-hydrolysis-dependent molecular chaperone, activating the urease apoprotein by helping to assemble the nickel containing metallocenter of UreC. The UreE protein probably delivers the nickel.</text>
</comment>
<comment type="subcellular location">
    <subcellularLocation>
        <location evidence="1">Cytoplasm</location>
    </subcellularLocation>
</comment>
<comment type="similarity">
    <text evidence="1">Belongs to the UreF family.</text>
</comment>
<comment type="sequence caution" evidence="2">
    <conflict type="erroneous initiation">
        <sequence resource="EMBL-CDS" id="AAK88134"/>
    </conflict>
</comment>
<feature type="chain" id="PRO_0000344067" description="Urease accessory protein UreF">
    <location>
        <begin position="1"/>
        <end position="223"/>
    </location>
</feature>
<keyword id="KW-0143">Chaperone</keyword>
<keyword id="KW-0963">Cytoplasm</keyword>
<keyword id="KW-0996">Nickel insertion</keyword>
<keyword id="KW-1185">Reference proteome</keyword>
<dbReference type="EMBL" id="AE007869">
    <property type="protein sequence ID" value="AAK88134.2"/>
    <property type="status" value="ALT_INIT"/>
    <property type="molecule type" value="Genomic_DNA"/>
</dbReference>
<dbReference type="RefSeq" id="NP_355349.2">
    <property type="nucleotide sequence ID" value="NC_003062.2"/>
</dbReference>
<dbReference type="RefSeq" id="WP_035255866.1">
    <property type="nucleotide sequence ID" value="NC_003062.2"/>
</dbReference>
<dbReference type="SMR" id="A9CHW6"/>
<dbReference type="STRING" id="176299.Atu2397"/>
<dbReference type="EnsemblBacteria" id="AAK88134">
    <property type="protein sequence ID" value="AAK88134"/>
    <property type="gene ID" value="Atu2397"/>
</dbReference>
<dbReference type="GeneID" id="1134435"/>
<dbReference type="KEGG" id="atu:Atu2397"/>
<dbReference type="PATRIC" id="fig|176299.10.peg.2406"/>
<dbReference type="eggNOG" id="COG0830">
    <property type="taxonomic scope" value="Bacteria"/>
</dbReference>
<dbReference type="HOGENOM" id="CLU_049215_2_0_5"/>
<dbReference type="OrthoDB" id="9798772at2"/>
<dbReference type="BioCyc" id="AGRO:ATU2397-MONOMER"/>
<dbReference type="Proteomes" id="UP000000813">
    <property type="component" value="Chromosome circular"/>
</dbReference>
<dbReference type="GO" id="GO:0005737">
    <property type="term" value="C:cytoplasm"/>
    <property type="evidence" value="ECO:0007669"/>
    <property type="project" value="UniProtKB-SubCell"/>
</dbReference>
<dbReference type="GO" id="GO:0016151">
    <property type="term" value="F:nickel cation binding"/>
    <property type="evidence" value="ECO:0007669"/>
    <property type="project" value="UniProtKB-UniRule"/>
</dbReference>
<dbReference type="Gene3D" id="1.10.4190.10">
    <property type="entry name" value="Urease accessory protein UreF"/>
    <property type="match status" value="1"/>
</dbReference>
<dbReference type="HAMAP" id="MF_01385">
    <property type="entry name" value="UreF"/>
    <property type="match status" value="1"/>
</dbReference>
<dbReference type="InterPro" id="IPR002639">
    <property type="entry name" value="UreF"/>
</dbReference>
<dbReference type="InterPro" id="IPR038277">
    <property type="entry name" value="UreF_sf"/>
</dbReference>
<dbReference type="PANTHER" id="PTHR33620">
    <property type="entry name" value="UREASE ACCESSORY PROTEIN F"/>
    <property type="match status" value="1"/>
</dbReference>
<dbReference type="PANTHER" id="PTHR33620:SF1">
    <property type="entry name" value="UREASE ACCESSORY PROTEIN F"/>
    <property type="match status" value="1"/>
</dbReference>
<dbReference type="Pfam" id="PF01730">
    <property type="entry name" value="UreF"/>
    <property type="match status" value="1"/>
</dbReference>
<dbReference type="PIRSF" id="PIRSF009467">
    <property type="entry name" value="Ureas_acces_UreF"/>
    <property type="match status" value="1"/>
</dbReference>
<reference key="1">
    <citation type="journal article" date="2001" name="Science">
        <title>The genome of the natural genetic engineer Agrobacterium tumefaciens C58.</title>
        <authorList>
            <person name="Wood D.W."/>
            <person name="Setubal J.C."/>
            <person name="Kaul R."/>
            <person name="Monks D.E."/>
            <person name="Kitajima J.P."/>
            <person name="Okura V.K."/>
            <person name="Zhou Y."/>
            <person name="Chen L."/>
            <person name="Wood G.E."/>
            <person name="Almeida N.F. Jr."/>
            <person name="Woo L."/>
            <person name="Chen Y."/>
            <person name="Paulsen I.T."/>
            <person name="Eisen J.A."/>
            <person name="Karp P.D."/>
            <person name="Bovee D. Sr."/>
            <person name="Chapman P."/>
            <person name="Clendenning J."/>
            <person name="Deatherage G."/>
            <person name="Gillet W."/>
            <person name="Grant C."/>
            <person name="Kutyavin T."/>
            <person name="Levy R."/>
            <person name="Li M.-J."/>
            <person name="McClelland E."/>
            <person name="Palmieri A."/>
            <person name="Raymond C."/>
            <person name="Rouse G."/>
            <person name="Saenphimmachak C."/>
            <person name="Wu Z."/>
            <person name="Romero P."/>
            <person name="Gordon D."/>
            <person name="Zhang S."/>
            <person name="Yoo H."/>
            <person name="Tao Y."/>
            <person name="Biddle P."/>
            <person name="Jung M."/>
            <person name="Krespan W."/>
            <person name="Perry M."/>
            <person name="Gordon-Kamm B."/>
            <person name="Liao L."/>
            <person name="Kim S."/>
            <person name="Hendrick C."/>
            <person name="Zhao Z.-Y."/>
            <person name="Dolan M."/>
            <person name="Chumley F."/>
            <person name="Tingey S.V."/>
            <person name="Tomb J.-F."/>
            <person name="Gordon M.P."/>
            <person name="Olson M.V."/>
            <person name="Nester E.W."/>
        </authorList>
    </citation>
    <scope>NUCLEOTIDE SEQUENCE [LARGE SCALE GENOMIC DNA]</scope>
    <source>
        <strain>C58 / ATCC 33970</strain>
    </source>
</reference>
<reference key="2">
    <citation type="journal article" date="2001" name="Science">
        <title>Genome sequence of the plant pathogen and biotechnology agent Agrobacterium tumefaciens C58.</title>
        <authorList>
            <person name="Goodner B."/>
            <person name="Hinkle G."/>
            <person name="Gattung S."/>
            <person name="Miller N."/>
            <person name="Blanchard M."/>
            <person name="Qurollo B."/>
            <person name="Goldman B.S."/>
            <person name="Cao Y."/>
            <person name="Askenazi M."/>
            <person name="Halling C."/>
            <person name="Mullin L."/>
            <person name="Houmiel K."/>
            <person name="Gordon J."/>
            <person name="Vaudin M."/>
            <person name="Iartchouk O."/>
            <person name="Epp A."/>
            <person name="Liu F."/>
            <person name="Wollam C."/>
            <person name="Allinger M."/>
            <person name="Doughty D."/>
            <person name="Scott C."/>
            <person name="Lappas C."/>
            <person name="Markelz B."/>
            <person name="Flanagan C."/>
            <person name="Crowell C."/>
            <person name="Gurson J."/>
            <person name="Lomo C."/>
            <person name="Sear C."/>
            <person name="Strub G."/>
            <person name="Cielo C."/>
            <person name="Slater S."/>
        </authorList>
    </citation>
    <scope>NUCLEOTIDE SEQUENCE [LARGE SCALE GENOMIC DNA]</scope>
    <source>
        <strain>C58 / ATCC 33970</strain>
    </source>
</reference>
<organism>
    <name type="scientific">Agrobacterium fabrum (strain C58 / ATCC 33970)</name>
    <name type="common">Agrobacterium tumefaciens (strain C58)</name>
    <dbReference type="NCBI Taxonomy" id="176299"/>
    <lineage>
        <taxon>Bacteria</taxon>
        <taxon>Pseudomonadati</taxon>
        <taxon>Pseudomonadota</taxon>
        <taxon>Alphaproteobacteria</taxon>
        <taxon>Hyphomicrobiales</taxon>
        <taxon>Rhizobiaceae</taxon>
        <taxon>Rhizobium/Agrobacterium group</taxon>
        <taxon>Agrobacterium</taxon>
        <taxon>Agrobacterium tumefaciens complex</taxon>
    </lineage>
</organism>
<protein>
    <recommendedName>
        <fullName evidence="1">Urease accessory protein UreF</fullName>
    </recommendedName>
</protein>
<sequence>MSAESGVAALLRLMAWLSPAFPVGGFSYSGGLEKAVEDGRVCDAAGLGGWVETLLRHGSLWNDAVFLAHAWRSSQDTTALSETANLGRALAGSAERYRETVLLGDAFIAAASAWPHAVLELLPKEAPYPVAIGAVAAGHGVPLRETLAAFLHAGVSQIVSAGIRLGVAGQKDGVAILAASEAVIEEIAARAALSTLDDLGSATVIADTAAMRHETQGTRLFRS</sequence>
<evidence type="ECO:0000255" key="1">
    <source>
        <dbReference type="HAMAP-Rule" id="MF_01385"/>
    </source>
</evidence>
<evidence type="ECO:0000305" key="2"/>
<proteinExistence type="inferred from homology"/>
<name>UREF_AGRFC</name>
<accession>A9CHW6</accession>
<gene>
    <name evidence="1" type="primary">ureF</name>
    <name type="ordered locus">Atu2397</name>
    <name type="ORF">AGR_C_4350</name>
</gene>